<comment type="function">
    <text evidence="1">Exhibits a very high intrinsic GTPase hydrolysis rate. Involved in the addition of a carboxymethylaminomethyl (cmnm) group at the wobble position (U34) of certain tRNAs, forming tRNA-cmnm(5)s(2)U34.</text>
</comment>
<comment type="cofactor">
    <cofactor evidence="1">
        <name>K(+)</name>
        <dbReference type="ChEBI" id="CHEBI:29103"/>
    </cofactor>
    <text evidence="1">Binds 1 potassium ion per subunit.</text>
</comment>
<comment type="subunit">
    <text evidence="1">Homodimer. Heterotetramer of two MnmE and two MnmG subunits.</text>
</comment>
<comment type="subcellular location">
    <subcellularLocation>
        <location evidence="1">Cytoplasm</location>
    </subcellularLocation>
</comment>
<comment type="similarity">
    <text evidence="1">Belongs to the TRAFAC class TrmE-Era-EngA-EngB-Septin-like GTPase superfamily. TrmE GTPase family.</text>
</comment>
<reference key="1">
    <citation type="submission" date="2006-05" db="EMBL/GenBank/DDBJ databases">
        <authorList>
            <consortium name="Genoscope"/>
        </authorList>
    </citation>
    <scope>NUCLEOTIDE SEQUENCE [LARGE SCALE GENOMIC DNA]</scope>
    <source>
        <strain>WH7803</strain>
    </source>
</reference>
<dbReference type="EC" id="3.6.-.-" evidence="1"/>
<dbReference type="EMBL" id="CT971583">
    <property type="protein sequence ID" value="CAK24766.1"/>
    <property type="molecule type" value="Genomic_DNA"/>
</dbReference>
<dbReference type="SMR" id="A5GPA1"/>
<dbReference type="STRING" id="32051.SynWH7803_2340"/>
<dbReference type="KEGG" id="syx:SynWH7803_2340"/>
<dbReference type="eggNOG" id="COG0486">
    <property type="taxonomic scope" value="Bacteria"/>
</dbReference>
<dbReference type="HOGENOM" id="CLU_019624_4_1_3"/>
<dbReference type="OrthoDB" id="9805918at2"/>
<dbReference type="Proteomes" id="UP000001566">
    <property type="component" value="Chromosome"/>
</dbReference>
<dbReference type="GO" id="GO:0005829">
    <property type="term" value="C:cytosol"/>
    <property type="evidence" value="ECO:0007669"/>
    <property type="project" value="TreeGrafter"/>
</dbReference>
<dbReference type="GO" id="GO:0005525">
    <property type="term" value="F:GTP binding"/>
    <property type="evidence" value="ECO:0007669"/>
    <property type="project" value="UniProtKB-UniRule"/>
</dbReference>
<dbReference type="GO" id="GO:0003924">
    <property type="term" value="F:GTPase activity"/>
    <property type="evidence" value="ECO:0007669"/>
    <property type="project" value="UniProtKB-UniRule"/>
</dbReference>
<dbReference type="GO" id="GO:0046872">
    <property type="term" value="F:metal ion binding"/>
    <property type="evidence" value="ECO:0007669"/>
    <property type="project" value="UniProtKB-KW"/>
</dbReference>
<dbReference type="GO" id="GO:0030488">
    <property type="term" value="P:tRNA methylation"/>
    <property type="evidence" value="ECO:0007669"/>
    <property type="project" value="TreeGrafter"/>
</dbReference>
<dbReference type="GO" id="GO:0002098">
    <property type="term" value="P:tRNA wobble uridine modification"/>
    <property type="evidence" value="ECO:0007669"/>
    <property type="project" value="TreeGrafter"/>
</dbReference>
<dbReference type="CDD" id="cd04164">
    <property type="entry name" value="trmE"/>
    <property type="match status" value="1"/>
</dbReference>
<dbReference type="CDD" id="cd14858">
    <property type="entry name" value="TrmE_N"/>
    <property type="match status" value="1"/>
</dbReference>
<dbReference type="Gene3D" id="3.40.50.300">
    <property type="entry name" value="P-loop containing nucleotide triphosphate hydrolases"/>
    <property type="match status" value="1"/>
</dbReference>
<dbReference type="Gene3D" id="3.30.1360.120">
    <property type="entry name" value="Probable tRNA modification gtpase trme, domain 1"/>
    <property type="match status" value="1"/>
</dbReference>
<dbReference type="Gene3D" id="1.20.120.430">
    <property type="entry name" value="tRNA modification GTPase MnmE domain 2"/>
    <property type="match status" value="1"/>
</dbReference>
<dbReference type="HAMAP" id="MF_00379">
    <property type="entry name" value="GTPase_MnmE"/>
    <property type="match status" value="1"/>
</dbReference>
<dbReference type="InterPro" id="IPR031168">
    <property type="entry name" value="G_TrmE"/>
</dbReference>
<dbReference type="InterPro" id="IPR006073">
    <property type="entry name" value="GTP-bd"/>
</dbReference>
<dbReference type="InterPro" id="IPR018948">
    <property type="entry name" value="GTP-bd_TrmE_N"/>
</dbReference>
<dbReference type="InterPro" id="IPR004520">
    <property type="entry name" value="GTPase_MnmE"/>
</dbReference>
<dbReference type="InterPro" id="IPR027368">
    <property type="entry name" value="MnmE_dom2"/>
</dbReference>
<dbReference type="InterPro" id="IPR025867">
    <property type="entry name" value="MnmE_helical"/>
</dbReference>
<dbReference type="InterPro" id="IPR027417">
    <property type="entry name" value="P-loop_NTPase"/>
</dbReference>
<dbReference type="InterPro" id="IPR005225">
    <property type="entry name" value="Small_GTP-bd"/>
</dbReference>
<dbReference type="InterPro" id="IPR027266">
    <property type="entry name" value="TrmE/GcvT_dom1"/>
</dbReference>
<dbReference type="NCBIfam" id="TIGR00450">
    <property type="entry name" value="mnmE_trmE_thdF"/>
    <property type="match status" value="1"/>
</dbReference>
<dbReference type="NCBIfam" id="NF003661">
    <property type="entry name" value="PRK05291.1-3"/>
    <property type="match status" value="1"/>
</dbReference>
<dbReference type="NCBIfam" id="TIGR00231">
    <property type="entry name" value="small_GTP"/>
    <property type="match status" value="1"/>
</dbReference>
<dbReference type="PANTHER" id="PTHR42714">
    <property type="entry name" value="TRNA MODIFICATION GTPASE GTPBP3"/>
    <property type="match status" value="1"/>
</dbReference>
<dbReference type="PANTHER" id="PTHR42714:SF2">
    <property type="entry name" value="TRNA MODIFICATION GTPASE GTPBP3, MITOCHONDRIAL"/>
    <property type="match status" value="1"/>
</dbReference>
<dbReference type="Pfam" id="PF01926">
    <property type="entry name" value="MMR_HSR1"/>
    <property type="match status" value="1"/>
</dbReference>
<dbReference type="Pfam" id="PF12631">
    <property type="entry name" value="MnmE_helical"/>
    <property type="match status" value="1"/>
</dbReference>
<dbReference type="Pfam" id="PF10396">
    <property type="entry name" value="TrmE_N"/>
    <property type="match status" value="1"/>
</dbReference>
<dbReference type="PRINTS" id="PR00449">
    <property type="entry name" value="RASTRNSFRMNG"/>
</dbReference>
<dbReference type="SUPFAM" id="SSF52540">
    <property type="entry name" value="P-loop containing nucleoside triphosphate hydrolases"/>
    <property type="match status" value="1"/>
</dbReference>
<dbReference type="SUPFAM" id="SSF116878">
    <property type="entry name" value="TrmE connector domain"/>
    <property type="match status" value="1"/>
</dbReference>
<dbReference type="PROSITE" id="PS51709">
    <property type="entry name" value="G_TRME"/>
    <property type="match status" value="1"/>
</dbReference>
<feature type="chain" id="PRO_0000345921" description="tRNA modification GTPase MnmE">
    <location>
        <begin position="1"/>
        <end position="460"/>
    </location>
</feature>
<feature type="domain" description="TrmE-type G">
    <location>
        <begin position="226"/>
        <end position="383"/>
    </location>
</feature>
<feature type="binding site" evidence="1">
    <location>
        <position position="29"/>
    </location>
    <ligand>
        <name>(6S)-5-formyl-5,6,7,8-tetrahydrofolate</name>
        <dbReference type="ChEBI" id="CHEBI:57457"/>
    </ligand>
</feature>
<feature type="binding site" evidence="1">
    <location>
        <position position="91"/>
    </location>
    <ligand>
        <name>(6S)-5-formyl-5,6,7,8-tetrahydrofolate</name>
        <dbReference type="ChEBI" id="CHEBI:57457"/>
    </ligand>
</feature>
<feature type="binding site" evidence="1">
    <location>
        <position position="131"/>
    </location>
    <ligand>
        <name>(6S)-5-formyl-5,6,7,8-tetrahydrofolate</name>
        <dbReference type="ChEBI" id="CHEBI:57457"/>
    </ligand>
</feature>
<feature type="binding site" evidence="1">
    <location>
        <begin position="236"/>
        <end position="241"/>
    </location>
    <ligand>
        <name>GTP</name>
        <dbReference type="ChEBI" id="CHEBI:37565"/>
    </ligand>
</feature>
<feature type="binding site" evidence="1">
    <location>
        <position position="236"/>
    </location>
    <ligand>
        <name>K(+)</name>
        <dbReference type="ChEBI" id="CHEBI:29103"/>
    </ligand>
</feature>
<feature type="binding site" evidence="1">
    <location>
        <position position="240"/>
    </location>
    <ligand>
        <name>Mg(2+)</name>
        <dbReference type="ChEBI" id="CHEBI:18420"/>
    </ligand>
</feature>
<feature type="binding site" evidence="1">
    <location>
        <begin position="255"/>
        <end position="261"/>
    </location>
    <ligand>
        <name>GTP</name>
        <dbReference type="ChEBI" id="CHEBI:37565"/>
    </ligand>
</feature>
<feature type="binding site" evidence="1">
    <location>
        <position position="255"/>
    </location>
    <ligand>
        <name>K(+)</name>
        <dbReference type="ChEBI" id="CHEBI:29103"/>
    </ligand>
</feature>
<feature type="binding site" evidence="1">
    <location>
        <position position="257"/>
    </location>
    <ligand>
        <name>K(+)</name>
        <dbReference type="ChEBI" id="CHEBI:29103"/>
    </ligand>
</feature>
<feature type="binding site" evidence="1">
    <location>
        <position position="260"/>
    </location>
    <ligand>
        <name>K(+)</name>
        <dbReference type="ChEBI" id="CHEBI:29103"/>
    </ligand>
</feature>
<feature type="binding site" evidence="1">
    <location>
        <position position="261"/>
    </location>
    <ligand>
        <name>Mg(2+)</name>
        <dbReference type="ChEBI" id="CHEBI:18420"/>
    </ligand>
</feature>
<feature type="binding site" evidence="1">
    <location>
        <begin position="280"/>
        <end position="283"/>
    </location>
    <ligand>
        <name>GTP</name>
        <dbReference type="ChEBI" id="CHEBI:37565"/>
    </ligand>
</feature>
<feature type="binding site" evidence="1">
    <location>
        <position position="460"/>
    </location>
    <ligand>
        <name>(6S)-5-formyl-5,6,7,8-tetrahydrofolate</name>
        <dbReference type="ChEBI" id="CHEBI:57457"/>
    </ligand>
</feature>
<protein>
    <recommendedName>
        <fullName evidence="1">tRNA modification GTPase MnmE</fullName>
        <ecNumber evidence="1">3.6.-.-</ecNumber>
    </recommendedName>
</protein>
<accession>A5GPA1</accession>
<name>MNME_SYNPW</name>
<sequence>MQEINRDAQTIAAVATAVAPGQGGIAVIRLSGPQAQAAVQSVTRIPGQQSWESHRVLYGHVLAGESGERIDEVLVLLMLAPRSFTGEDVVEIHCHGGVIAVQRVLARVLDQPGVRRALPGEFSQRAVLNGRLDLTRAEAISDLVAARSQRAAELAMAGVDGGIQKRITALRDRLLDQLSELEARVDFEEDLPALDGAALLEELQRVRGALQQLVKDGQVGAALRQGLRVALVGRPNVGKSSLLNRLSRRERAIVTDLPGTTRDLLESEIVLEGVPITLLDTAGIRATSDAVERLGIARSHDALASADLVLLLFDLSVGWTPDDEALRQRIPAAVPHLLVGNKVDVAVSDARAGTSGSAADIRLSASTGAGEAELVQAVLERCGALADGSLLLSLNQRQGDLAQQAADALARSAQVAADGLPWDFWTIDLRQAIHSLGEITGEELTESVLDRIFSRFCIGK</sequence>
<proteinExistence type="inferred from homology"/>
<keyword id="KW-0963">Cytoplasm</keyword>
<keyword id="KW-0342">GTP-binding</keyword>
<keyword id="KW-0378">Hydrolase</keyword>
<keyword id="KW-0460">Magnesium</keyword>
<keyword id="KW-0479">Metal-binding</keyword>
<keyword id="KW-0547">Nucleotide-binding</keyword>
<keyword id="KW-0630">Potassium</keyword>
<keyword id="KW-1185">Reference proteome</keyword>
<keyword id="KW-0819">tRNA processing</keyword>
<gene>
    <name evidence="1" type="primary">mnmE</name>
    <name evidence="1" type="synonym">trmE</name>
    <name type="ordered locus">SynWH7803_2340</name>
</gene>
<organism>
    <name type="scientific">Synechococcus sp. (strain WH7803)</name>
    <dbReference type="NCBI Taxonomy" id="32051"/>
    <lineage>
        <taxon>Bacteria</taxon>
        <taxon>Bacillati</taxon>
        <taxon>Cyanobacteriota</taxon>
        <taxon>Cyanophyceae</taxon>
        <taxon>Synechococcales</taxon>
        <taxon>Synechococcaceae</taxon>
        <taxon>Synechococcus</taxon>
    </lineage>
</organism>
<evidence type="ECO:0000255" key="1">
    <source>
        <dbReference type="HAMAP-Rule" id="MF_00379"/>
    </source>
</evidence>